<proteinExistence type="inferred from homology"/>
<feature type="chain" id="PRO_1000072493" description="UDP-3-O-acylglucosamine N-acyltransferase">
    <location>
        <begin position="1"/>
        <end position="353"/>
    </location>
</feature>
<feature type="active site" description="Proton acceptor" evidence="1">
    <location>
        <position position="258"/>
    </location>
</feature>
<accession>A7HY09</accession>
<comment type="function">
    <text evidence="1">Catalyzes the N-acylation of UDP-3-O-acylglucosamine using 3-hydroxyacyl-ACP as the acyl donor. Is involved in the biosynthesis of lipid A, a phosphorylated glycolipid that anchors the lipopolysaccharide to the outer membrane of the cell.</text>
</comment>
<comment type="catalytic activity">
    <reaction evidence="1">
        <text>a UDP-3-O-[(3R)-3-hydroxyacyl]-alpha-D-glucosamine + a (3R)-hydroxyacyl-[ACP] = a UDP-2-N,3-O-bis[(3R)-3-hydroxyacyl]-alpha-D-glucosamine + holo-[ACP] + H(+)</text>
        <dbReference type="Rhea" id="RHEA:53836"/>
        <dbReference type="Rhea" id="RHEA-COMP:9685"/>
        <dbReference type="Rhea" id="RHEA-COMP:9945"/>
        <dbReference type="ChEBI" id="CHEBI:15378"/>
        <dbReference type="ChEBI" id="CHEBI:64479"/>
        <dbReference type="ChEBI" id="CHEBI:78827"/>
        <dbReference type="ChEBI" id="CHEBI:137740"/>
        <dbReference type="ChEBI" id="CHEBI:137748"/>
        <dbReference type="EC" id="2.3.1.191"/>
    </reaction>
</comment>
<comment type="pathway">
    <text evidence="1">Bacterial outer membrane biogenesis; LPS lipid A biosynthesis.</text>
</comment>
<comment type="subunit">
    <text evidence="1">Homotrimer.</text>
</comment>
<comment type="similarity">
    <text evidence="1">Belongs to the transferase hexapeptide repeat family. LpxD subfamily.</text>
</comment>
<gene>
    <name evidence="1" type="primary">lpxD</name>
    <name type="ordered locus">Plav_3186</name>
</gene>
<name>LPXD_PARL1</name>
<sequence length="353" mass="36746">MADKRFFEAKEPLSLGEIAGRIGAALADADDGSRIVTGVAPLDTAGSNDLSFLDNPKYAEAFYATAAGACIVHPRFAERAPDNVALILSDQPYRAYALVAQIFHPDEAHGADTFGARGEIHPRATVHPTAKLGTGVTLEPGVTIGAGVEIGNNTVIGTNTSVGKGCTVGKDCFIGPNVTLSHAHLGDRVMVHPGVRIGQDGFGFAMGLPRHEKVPQLGRVIVQDDVEIGANSTVDRGAGPDTVIGEGTKIDNLVQIGHNVEIGRGCIIVSQTGIAGSTKLGDFVVLAAQVGVTGHLTINSGAQIAARGAVVHDVPAGQQYGGVPAKPIAEWRREVVELRKLGRRRRSGTKADD</sequence>
<dbReference type="EC" id="2.3.1.191" evidence="1"/>
<dbReference type="EMBL" id="CP000774">
    <property type="protein sequence ID" value="ABS64792.1"/>
    <property type="molecule type" value="Genomic_DNA"/>
</dbReference>
<dbReference type="RefSeq" id="WP_012112118.1">
    <property type="nucleotide sequence ID" value="NC_009719.1"/>
</dbReference>
<dbReference type="SMR" id="A7HY09"/>
<dbReference type="STRING" id="402881.Plav_3186"/>
<dbReference type="KEGG" id="pla:Plav_3186"/>
<dbReference type="eggNOG" id="COG1044">
    <property type="taxonomic scope" value="Bacteria"/>
</dbReference>
<dbReference type="HOGENOM" id="CLU_049865_0_2_5"/>
<dbReference type="OrthoDB" id="9784739at2"/>
<dbReference type="UniPathway" id="UPA00973"/>
<dbReference type="Proteomes" id="UP000006377">
    <property type="component" value="Chromosome"/>
</dbReference>
<dbReference type="GO" id="GO:0016020">
    <property type="term" value="C:membrane"/>
    <property type="evidence" value="ECO:0007669"/>
    <property type="project" value="GOC"/>
</dbReference>
<dbReference type="GO" id="GO:0016410">
    <property type="term" value="F:N-acyltransferase activity"/>
    <property type="evidence" value="ECO:0007669"/>
    <property type="project" value="InterPro"/>
</dbReference>
<dbReference type="GO" id="GO:0009245">
    <property type="term" value="P:lipid A biosynthetic process"/>
    <property type="evidence" value="ECO:0007669"/>
    <property type="project" value="UniProtKB-UniRule"/>
</dbReference>
<dbReference type="CDD" id="cd03352">
    <property type="entry name" value="LbH_LpxD"/>
    <property type="match status" value="1"/>
</dbReference>
<dbReference type="Gene3D" id="2.160.10.10">
    <property type="entry name" value="Hexapeptide repeat proteins"/>
    <property type="match status" value="1"/>
</dbReference>
<dbReference type="Gene3D" id="3.40.1390.10">
    <property type="entry name" value="MurE/MurF, N-terminal domain"/>
    <property type="match status" value="1"/>
</dbReference>
<dbReference type="HAMAP" id="MF_00523">
    <property type="entry name" value="LpxD"/>
    <property type="match status" value="1"/>
</dbReference>
<dbReference type="InterPro" id="IPR001451">
    <property type="entry name" value="Hexapep"/>
</dbReference>
<dbReference type="InterPro" id="IPR007691">
    <property type="entry name" value="LpxD"/>
</dbReference>
<dbReference type="InterPro" id="IPR011004">
    <property type="entry name" value="Trimer_LpxA-like_sf"/>
</dbReference>
<dbReference type="InterPro" id="IPR020573">
    <property type="entry name" value="UDP_GlcNAc_AcTrfase_non-rep"/>
</dbReference>
<dbReference type="NCBIfam" id="TIGR01853">
    <property type="entry name" value="lipid_A_lpxD"/>
    <property type="match status" value="1"/>
</dbReference>
<dbReference type="NCBIfam" id="NF002060">
    <property type="entry name" value="PRK00892.1"/>
    <property type="match status" value="1"/>
</dbReference>
<dbReference type="PANTHER" id="PTHR43378">
    <property type="entry name" value="UDP-3-O-ACYLGLUCOSAMINE N-ACYLTRANSFERASE"/>
    <property type="match status" value="1"/>
</dbReference>
<dbReference type="PANTHER" id="PTHR43378:SF2">
    <property type="entry name" value="UDP-3-O-ACYLGLUCOSAMINE N-ACYLTRANSFERASE 1, MITOCHONDRIAL-RELATED"/>
    <property type="match status" value="1"/>
</dbReference>
<dbReference type="Pfam" id="PF00132">
    <property type="entry name" value="Hexapep"/>
    <property type="match status" value="2"/>
</dbReference>
<dbReference type="Pfam" id="PF04613">
    <property type="entry name" value="LpxD"/>
    <property type="match status" value="1"/>
</dbReference>
<dbReference type="SUPFAM" id="SSF51161">
    <property type="entry name" value="Trimeric LpxA-like enzymes"/>
    <property type="match status" value="1"/>
</dbReference>
<evidence type="ECO:0000255" key="1">
    <source>
        <dbReference type="HAMAP-Rule" id="MF_00523"/>
    </source>
</evidence>
<organism>
    <name type="scientific">Parvibaculum lavamentivorans (strain DS-1 / DSM 13023 / NCIMB 13966)</name>
    <dbReference type="NCBI Taxonomy" id="402881"/>
    <lineage>
        <taxon>Bacteria</taxon>
        <taxon>Pseudomonadati</taxon>
        <taxon>Pseudomonadota</taxon>
        <taxon>Alphaproteobacteria</taxon>
        <taxon>Hyphomicrobiales</taxon>
        <taxon>Parvibaculaceae</taxon>
        <taxon>Parvibaculum</taxon>
    </lineage>
</organism>
<reference key="1">
    <citation type="journal article" date="2011" name="Stand. Genomic Sci.">
        <title>Complete genome sequence of Parvibaculum lavamentivorans type strain (DS-1(T)).</title>
        <authorList>
            <person name="Schleheck D."/>
            <person name="Weiss M."/>
            <person name="Pitluck S."/>
            <person name="Bruce D."/>
            <person name="Land M.L."/>
            <person name="Han S."/>
            <person name="Saunders E."/>
            <person name="Tapia R."/>
            <person name="Detter C."/>
            <person name="Brettin T."/>
            <person name="Han J."/>
            <person name="Woyke T."/>
            <person name="Goodwin L."/>
            <person name="Pennacchio L."/>
            <person name="Nolan M."/>
            <person name="Cook A.M."/>
            <person name="Kjelleberg S."/>
            <person name="Thomas T."/>
        </authorList>
    </citation>
    <scope>NUCLEOTIDE SEQUENCE [LARGE SCALE GENOMIC DNA]</scope>
    <source>
        <strain>DS-1 / DSM 13023 / NCIMB 13966</strain>
    </source>
</reference>
<keyword id="KW-0012">Acyltransferase</keyword>
<keyword id="KW-0441">Lipid A biosynthesis</keyword>
<keyword id="KW-0444">Lipid biosynthesis</keyword>
<keyword id="KW-0443">Lipid metabolism</keyword>
<keyword id="KW-1185">Reference proteome</keyword>
<keyword id="KW-0677">Repeat</keyword>
<keyword id="KW-0808">Transferase</keyword>
<protein>
    <recommendedName>
        <fullName evidence="1">UDP-3-O-acylglucosamine N-acyltransferase</fullName>
        <ecNumber evidence="1">2.3.1.191</ecNumber>
    </recommendedName>
</protein>